<gene>
    <name evidence="1" type="primary">pth</name>
    <name type="ordered locus">ABO_0516</name>
</gene>
<sequence>MADPVRLIVGLGNPGREYEDTRHNAGVWYVDALARRQGVFLTEDKKYFGLTATFSFEGETIRLLVPTTFMNRSGQATAALANFFKIPVTQILVAHDELDLPPGCARFKQGGGHGGHNGLRDIISRHGNSRDFYRLRLGIGHPGSADRVTPHVLSKPSKADRDLIDRAIDEAVHNTADMLRGDLNSAMNRLNGFKA</sequence>
<comment type="function">
    <text evidence="1">Hydrolyzes ribosome-free peptidyl-tRNAs (with 1 or more amino acids incorporated), which drop off the ribosome during protein synthesis, or as a result of ribosome stalling.</text>
</comment>
<comment type="function">
    <text evidence="1">Catalyzes the release of premature peptidyl moieties from peptidyl-tRNA molecules trapped in stalled 50S ribosomal subunits, and thus maintains levels of free tRNAs and 50S ribosomes.</text>
</comment>
<comment type="catalytic activity">
    <reaction evidence="1">
        <text>an N-acyl-L-alpha-aminoacyl-tRNA + H2O = an N-acyl-L-amino acid + a tRNA + H(+)</text>
        <dbReference type="Rhea" id="RHEA:54448"/>
        <dbReference type="Rhea" id="RHEA-COMP:10123"/>
        <dbReference type="Rhea" id="RHEA-COMP:13883"/>
        <dbReference type="ChEBI" id="CHEBI:15377"/>
        <dbReference type="ChEBI" id="CHEBI:15378"/>
        <dbReference type="ChEBI" id="CHEBI:59874"/>
        <dbReference type="ChEBI" id="CHEBI:78442"/>
        <dbReference type="ChEBI" id="CHEBI:138191"/>
        <dbReference type="EC" id="3.1.1.29"/>
    </reaction>
</comment>
<comment type="subunit">
    <text evidence="1">Monomer.</text>
</comment>
<comment type="subcellular location">
    <subcellularLocation>
        <location evidence="1">Cytoplasm</location>
    </subcellularLocation>
</comment>
<comment type="similarity">
    <text evidence="1">Belongs to the PTH family.</text>
</comment>
<dbReference type="EC" id="3.1.1.29" evidence="1"/>
<dbReference type="EMBL" id="AM286690">
    <property type="protein sequence ID" value="CAL15964.1"/>
    <property type="molecule type" value="Genomic_DNA"/>
</dbReference>
<dbReference type="RefSeq" id="WP_011587802.1">
    <property type="nucleotide sequence ID" value="NC_008260.1"/>
</dbReference>
<dbReference type="SMR" id="Q0VS84"/>
<dbReference type="STRING" id="393595.ABO_0516"/>
<dbReference type="KEGG" id="abo:ABO_0516"/>
<dbReference type="eggNOG" id="COG0193">
    <property type="taxonomic scope" value="Bacteria"/>
</dbReference>
<dbReference type="HOGENOM" id="CLU_062456_3_1_6"/>
<dbReference type="OrthoDB" id="9800507at2"/>
<dbReference type="Proteomes" id="UP000008871">
    <property type="component" value="Chromosome"/>
</dbReference>
<dbReference type="GO" id="GO:0005737">
    <property type="term" value="C:cytoplasm"/>
    <property type="evidence" value="ECO:0007669"/>
    <property type="project" value="UniProtKB-SubCell"/>
</dbReference>
<dbReference type="GO" id="GO:0004045">
    <property type="term" value="F:peptidyl-tRNA hydrolase activity"/>
    <property type="evidence" value="ECO:0007669"/>
    <property type="project" value="UniProtKB-UniRule"/>
</dbReference>
<dbReference type="GO" id="GO:0000049">
    <property type="term" value="F:tRNA binding"/>
    <property type="evidence" value="ECO:0007669"/>
    <property type="project" value="UniProtKB-UniRule"/>
</dbReference>
<dbReference type="GO" id="GO:0006515">
    <property type="term" value="P:protein quality control for misfolded or incompletely synthesized proteins"/>
    <property type="evidence" value="ECO:0007669"/>
    <property type="project" value="UniProtKB-UniRule"/>
</dbReference>
<dbReference type="GO" id="GO:0072344">
    <property type="term" value="P:rescue of stalled ribosome"/>
    <property type="evidence" value="ECO:0007669"/>
    <property type="project" value="UniProtKB-UniRule"/>
</dbReference>
<dbReference type="CDD" id="cd00462">
    <property type="entry name" value="PTH"/>
    <property type="match status" value="1"/>
</dbReference>
<dbReference type="FunFam" id="3.40.50.1470:FF:000001">
    <property type="entry name" value="Peptidyl-tRNA hydrolase"/>
    <property type="match status" value="1"/>
</dbReference>
<dbReference type="Gene3D" id="3.40.50.1470">
    <property type="entry name" value="Peptidyl-tRNA hydrolase"/>
    <property type="match status" value="1"/>
</dbReference>
<dbReference type="HAMAP" id="MF_00083">
    <property type="entry name" value="Pept_tRNA_hydro_bact"/>
    <property type="match status" value="1"/>
</dbReference>
<dbReference type="InterPro" id="IPR001328">
    <property type="entry name" value="Pept_tRNA_hydro"/>
</dbReference>
<dbReference type="InterPro" id="IPR018171">
    <property type="entry name" value="Pept_tRNA_hydro_CS"/>
</dbReference>
<dbReference type="InterPro" id="IPR036416">
    <property type="entry name" value="Pept_tRNA_hydro_sf"/>
</dbReference>
<dbReference type="NCBIfam" id="TIGR00447">
    <property type="entry name" value="pth"/>
    <property type="match status" value="1"/>
</dbReference>
<dbReference type="PANTHER" id="PTHR17224">
    <property type="entry name" value="PEPTIDYL-TRNA HYDROLASE"/>
    <property type="match status" value="1"/>
</dbReference>
<dbReference type="PANTHER" id="PTHR17224:SF1">
    <property type="entry name" value="PEPTIDYL-TRNA HYDROLASE"/>
    <property type="match status" value="1"/>
</dbReference>
<dbReference type="Pfam" id="PF01195">
    <property type="entry name" value="Pept_tRNA_hydro"/>
    <property type="match status" value="1"/>
</dbReference>
<dbReference type="SUPFAM" id="SSF53178">
    <property type="entry name" value="Peptidyl-tRNA hydrolase-like"/>
    <property type="match status" value="1"/>
</dbReference>
<dbReference type="PROSITE" id="PS01195">
    <property type="entry name" value="PEPT_TRNA_HYDROL_1"/>
    <property type="match status" value="1"/>
</dbReference>
<dbReference type="PROSITE" id="PS01196">
    <property type="entry name" value="PEPT_TRNA_HYDROL_2"/>
    <property type="match status" value="1"/>
</dbReference>
<evidence type="ECO:0000255" key="1">
    <source>
        <dbReference type="HAMAP-Rule" id="MF_00083"/>
    </source>
</evidence>
<protein>
    <recommendedName>
        <fullName evidence="1">Peptidyl-tRNA hydrolase</fullName>
        <shortName evidence="1">Pth</shortName>
        <ecNumber evidence="1">3.1.1.29</ecNumber>
    </recommendedName>
</protein>
<feature type="chain" id="PRO_0000264000" description="Peptidyl-tRNA hydrolase">
    <location>
        <begin position="1"/>
        <end position="195"/>
    </location>
</feature>
<feature type="active site" description="Proton acceptor" evidence="1">
    <location>
        <position position="23"/>
    </location>
</feature>
<feature type="binding site" evidence="1">
    <location>
        <position position="18"/>
    </location>
    <ligand>
        <name>tRNA</name>
        <dbReference type="ChEBI" id="CHEBI:17843"/>
    </ligand>
</feature>
<feature type="binding site" evidence="1">
    <location>
        <position position="69"/>
    </location>
    <ligand>
        <name>tRNA</name>
        <dbReference type="ChEBI" id="CHEBI:17843"/>
    </ligand>
</feature>
<feature type="binding site" evidence="1">
    <location>
        <position position="71"/>
    </location>
    <ligand>
        <name>tRNA</name>
        <dbReference type="ChEBI" id="CHEBI:17843"/>
    </ligand>
</feature>
<feature type="binding site" evidence="1">
    <location>
        <position position="117"/>
    </location>
    <ligand>
        <name>tRNA</name>
        <dbReference type="ChEBI" id="CHEBI:17843"/>
    </ligand>
</feature>
<feature type="site" description="Discriminates between blocked and unblocked aminoacyl-tRNA" evidence="1">
    <location>
        <position position="13"/>
    </location>
</feature>
<feature type="site" description="Stabilizes the basic form of H active site to accept a proton" evidence="1">
    <location>
        <position position="96"/>
    </location>
</feature>
<accession>Q0VS84</accession>
<proteinExistence type="inferred from homology"/>
<reference key="1">
    <citation type="journal article" date="2006" name="Nat. Biotechnol.">
        <title>Genome sequence of the ubiquitous hydrocarbon-degrading marine bacterium Alcanivorax borkumensis.</title>
        <authorList>
            <person name="Schneiker S."/>
            <person name="Martins dos Santos V.A.P."/>
            <person name="Bartels D."/>
            <person name="Bekel T."/>
            <person name="Brecht M."/>
            <person name="Buhrmester J."/>
            <person name="Chernikova T.N."/>
            <person name="Denaro R."/>
            <person name="Ferrer M."/>
            <person name="Gertler C."/>
            <person name="Goesmann A."/>
            <person name="Golyshina O.V."/>
            <person name="Kaminski F."/>
            <person name="Khachane A.N."/>
            <person name="Lang S."/>
            <person name="Linke B."/>
            <person name="McHardy A.C."/>
            <person name="Meyer F."/>
            <person name="Nechitaylo T."/>
            <person name="Puehler A."/>
            <person name="Regenhardt D."/>
            <person name="Rupp O."/>
            <person name="Sabirova J.S."/>
            <person name="Selbitschka W."/>
            <person name="Yakimov M.M."/>
            <person name="Timmis K.N."/>
            <person name="Vorhoelter F.-J."/>
            <person name="Weidner S."/>
            <person name="Kaiser O."/>
            <person name="Golyshin P.N."/>
        </authorList>
    </citation>
    <scope>NUCLEOTIDE SEQUENCE [LARGE SCALE GENOMIC DNA]</scope>
    <source>
        <strain>ATCC 700651 / DSM 11573 / NCIMB 13689 / SK2</strain>
    </source>
</reference>
<organism>
    <name type="scientific">Alcanivorax borkumensis (strain ATCC 700651 / DSM 11573 / NCIMB 13689 / SK2)</name>
    <dbReference type="NCBI Taxonomy" id="393595"/>
    <lineage>
        <taxon>Bacteria</taxon>
        <taxon>Pseudomonadati</taxon>
        <taxon>Pseudomonadota</taxon>
        <taxon>Gammaproteobacteria</taxon>
        <taxon>Oceanospirillales</taxon>
        <taxon>Alcanivoracaceae</taxon>
        <taxon>Alcanivorax</taxon>
    </lineage>
</organism>
<name>PTH_ALCBS</name>
<keyword id="KW-0963">Cytoplasm</keyword>
<keyword id="KW-0378">Hydrolase</keyword>
<keyword id="KW-1185">Reference proteome</keyword>
<keyword id="KW-0694">RNA-binding</keyword>
<keyword id="KW-0820">tRNA-binding</keyword>